<proteinExistence type="inferred from homology"/>
<feature type="chain" id="PRO_1000005894" description="DNA-directed RNA polymerase subunit omega">
    <location>
        <begin position="1"/>
        <end position="130"/>
    </location>
</feature>
<feature type="region of interest" description="Disordered" evidence="2">
    <location>
        <begin position="110"/>
        <end position="130"/>
    </location>
</feature>
<reference key="1">
    <citation type="journal article" date="2007" name="Science">
        <title>Legumes symbioses: absence of nod genes in photosynthetic bradyrhizobia.</title>
        <authorList>
            <person name="Giraud E."/>
            <person name="Moulin L."/>
            <person name="Vallenet D."/>
            <person name="Barbe V."/>
            <person name="Cytryn E."/>
            <person name="Avarre J.-C."/>
            <person name="Jaubert M."/>
            <person name="Simon D."/>
            <person name="Cartieaux F."/>
            <person name="Prin Y."/>
            <person name="Bena G."/>
            <person name="Hannibal L."/>
            <person name="Fardoux J."/>
            <person name="Kojadinovic M."/>
            <person name="Vuillet L."/>
            <person name="Lajus A."/>
            <person name="Cruveiller S."/>
            <person name="Rouy Z."/>
            <person name="Mangenot S."/>
            <person name="Segurens B."/>
            <person name="Dossat C."/>
            <person name="Franck W.L."/>
            <person name="Chang W.-S."/>
            <person name="Saunders E."/>
            <person name="Bruce D."/>
            <person name="Richardson P."/>
            <person name="Normand P."/>
            <person name="Dreyfus B."/>
            <person name="Pignol D."/>
            <person name="Stacey G."/>
            <person name="Emerich D."/>
            <person name="Vermeglio A."/>
            <person name="Medigue C."/>
            <person name="Sadowsky M."/>
        </authorList>
    </citation>
    <scope>NUCLEOTIDE SEQUENCE [LARGE SCALE GENOMIC DNA]</scope>
    <source>
        <strain>ORS 278</strain>
    </source>
</reference>
<accession>A4YWD3</accession>
<dbReference type="EC" id="2.7.7.6" evidence="1"/>
<dbReference type="EMBL" id="CU234118">
    <property type="protein sequence ID" value="CAL78209.1"/>
    <property type="molecule type" value="Genomic_DNA"/>
</dbReference>
<dbReference type="RefSeq" id="WP_006612728.1">
    <property type="nucleotide sequence ID" value="NC_009445.1"/>
</dbReference>
<dbReference type="SMR" id="A4YWD3"/>
<dbReference type="STRING" id="114615.BRADO4469"/>
<dbReference type="KEGG" id="bra:BRADO4469"/>
<dbReference type="eggNOG" id="COG1758">
    <property type="taxonomic scope" value="Bacteria"/>
</dbReference>
<dbReference type="HOGENOM" id="CLU_125406_2_0_5"/>
<dbReference type="OrthoDB" id="9796300at2"/>
<dbReference type="Proteomes" id="UP000001994">
    <property type="component" value="Chromosome"/>
</dbReference>
<dbReference type="GO" id="GO:0000428">
    <property type="term" value="C:DNA-directed RNA polymerase complex"/>
    <property type="evidence" value="ECO:0007669"/>
    <property type="project" value="UniProtKB-KW"/>
</dbReference>
<dbReference type="GO" id="GO:0003677">
    <property type="term" value="F:DNA binding"/>
    <property type="evidence" value="ECO:0007669"/>
    <property type="project" value="UniProtKB-UniRule"/>
</dbReference>
<dbReference type="GO" id="GO:0003899">
    <property type="term" value="F:DNA-directed RNA polymerase activity"/>
    <property type="evidence" value="ECO:0007669"/>
    <property type="project" value="UniProtKB-UniRule"/>
</dbReference>
<dbReference type="GO" id="GO:0006351">
    <property type="term" value="P:DNA-templated transcription"/>
    <property type="evidence" value="ECO:0007669"/>
    <property type="project" value="UniProtKB-UniRule"/>
</dbReference>
<dbReference type="Gene3D" id="3.90.940.10">
    <property type="match status" value="1"/>
</dbReference>
<dbReference type="HAMAP" id="MF_00366">
    <property type="entry name" value="RNApol_bact_RpoZ"/>
    <property type="match status" value="1"/>
</dbReference>
<dbReference type="InterPro" id="IPR003716">
    <property type="entry name" value="DNA-dir_RNA_pol_omega"/>
</dbReference>
<dbReference type="InterPro" id="IPR006110">
    <property type="entry name" value="Pol_omega/Rpo6/RPB6"/>
</dbReference>
<dbReference type="InterPro" id="IPR036161">
    <property type="entry name" value="RPB6/omega-like_sf"/>
</dbReference>
<dbReference type="NCBIfam" id="TIGR00690">
    <property type="entry name" value="rpoZ"/>
    <property type="match status" value="1"/>
</dbReference>
<dbReference type="PANTHER" id="PTHR34476">
    <property type="entry name" value="DNA-DIRECTED RNA POLYMERASE SUBUNIT OMEGA"/>
    <property type="match status" value="1"/>
</dbReference>
<dbReference type="PANTHER" id="PTHR34476:SF1">
    <property type="entry name" value="DNA-DIRECTED RNA POLYMERASE SUBUNIT OMEGA"/>
    <property type="match status" value="1"/>
</dbReference>
<dbReference type="Pfam" id="PF01192">
    <property type="entry name" value="RNA_pol_Rpb6"/>
    <property type="match status" value="1"/>
</dbReference>
<dbReference type="SMART" id="SM01409">
    <property type="entry name" value="RNA_pol_Rpb6"/>
    <property type="match status" value="1"/>
</dbReference>
<dbReference type="SUPFAM" id="SSF63562">
    <property type="entry name" value="RPB6/omega subunit-like"/>
    <property type="match status" value="1"/>
</dbReference>
<evidence type="ECO:0000255" key="1">
    <source>
        <dbReference type="HAMAP-Rule" id="MF_00366"/>
    </source>
</evidence>
<evidence type="ECO:0000256" key="2">
    <source>
        <dbReference type="SAM" id="MobiDB-lite"/>
    </source>
</evidence>
<sequence>MARVTVEDCIDKVDNRFDLVLLAAHRARMISSGSQLTIDRDNDKNPVVALREIADSTISPEDLKEELVHSLQKFVEVDEPEPDTVPLIGSAGASVDADDTEVAVERMTEEELLKGLEGLAPPEEQPEEDE</sequence>
<keyword id="KW-0240">DNA-directed RNA polymerase</keyword>
<keyword id="KW-0548">Nucleotidyltransferase</keyword>
<keyword id="KW-1185">Reference proteome</keyword>
<keyword id="KW-0804">Transcription</keyword>
<keyword id="KW-0808">Transferase</keyword>
<comment type="function">
    <text evidence="1">Promotes RNA polymerase assembly. Latches the N- and C-terminal regions of the beta' subunit thereby facilitating its interaction with the beta and alpha subunits.</text>
</comment>
<comment type="catalytic activity">
    <reaction evidence="1">
        <text>RNA(n) + a ribonucleoside 5'-triphosphate = RNA(n+1) + diphosphate</text>
        <dbReference type="Rhea" id="RHEA:21248"/>
        <dbReference type="Rhea" id="RHEA-COMP:14527"/>
        <dbReference type="Rhea" id="RHEA-COMP:17342"/>
        <dbReference type="ChEBI" id="CHEBI:33019"/>
        <dbReference type="ChEBI" id="CHEBI:61557"/>
        <dbReference type="ChEBI" id="CHEBI:140395"/>
        <dbReference type="EC" id="2.7.7.6"/>
    </reaction>
</comment>
<comment type="subunit">
    <text evidence="1">The RNAP catalytic core consists of 2 alpha, 1 beta, 1 beta' and 1 omega subunit. When a sigma factor is associated with the core the holoenzyme is formed, which can initiate transcription.</text>
</comment>
<comment type="similarity">
    <text evidence="1">Belongs to the RNA polymerase subunit omega family.</text>
</comment>
<name>RPOZ_BRASO</name>
<gene>
    <name evidence="1" type="primary">rpoZ</name>
    <name type="ordered locus">BRADO4469</name>
</gene>
<protein>
    <recommendedName>
        <fullName evidence="1">DNA-directed RNA polymerase subunit omega</fullName>
        <shortName evidence="1">RNAP omega subunit</shortName>
        <ecNumber evidence="1">2.7.7.6</ecNumber>
    </recommendedName>
    <alternativeName>
        <fullName evidence="1">RNA polymerase omega subunit</fullName>
    </alternativeName>
    <alternativeName>
        <fullName evidence="1">Transcriptase subunit omega</fullName>
    </alternativeName>
</protein>
<organism>
    <name type="scientific">Bradyrhizobium sp. (strain ORS 278)</name>
    <dbReference type="NCBI Taxonomy" id="114615"/>
    <lineage>
        <taxon>Bacteria</taxon>
        <taxon>Pseudomonadati</taxon>
        <taxon>Pseudomonadota</taxon>
        <taxon>Alphaproteobacteria</taxon>
        <taxon>Hyphomicrobiales</taxon>
        <taxon>Nitrobacteraceae</taxon>
        <taxon>Bradyrhizobium</taxon>
    </lineage>
</organism>